<reference key="1">
    <citation type="submission" date="2003-10" db="EMBL/GenBank/DDBJ databases">
        <title>The complete genome sequence of the alkaliphilic Bacillus clausii KSM-K16.</title>
        <authorList>
            <person name="Takaki Y."/>
            <person name="Kageyama Y."/>
            <person name="Shimamura S."/>
            <person name="Suzuki H."/>
            <person name="Nishi S."/>
            <person name="Hatada Y."/>
            <person name="Kawai S."/>
            <person name="Ito S."/>
            <person name="Horikoshi K."/>
        </authorList>
    </citation>
    <scope>NUCLEOTIDE SEQUENCE [LARGE SCALE GENOMIC DNA]</scope>
    <source>
        <strain>KSM-K16</strain>
    </source>
</reference>
<keyword id="KW-1185">Reference proteome</keyword>
<protein>
    <recommendedName>
        <fullName evidence="1">UPF0354 protein ABC2771</fullName>
    </recommendedName>
</protein>
<sequence>MDLQTFRKQIEKKLQRDGWTIRYDHKESTLRIEDKATKKGATLALKPLLAKWEREEYAAVDEALRTVAVGLESMAKAVHLNGNEKNIFPVIRAASFPDKTKDGKTLVYQKHTAETRIYYAVDLGETYTLITDELLNESGWELKALAEMATFNVRSLPQPFKEDEVAGNRFYFLSANDGYDASRILDQSLVQRMEQKAVGQLVAAIPHQDALIFADIENDTGYDVLGQMALQFFGGGRIPVTALPFIVENGQLEPVFIMAQKKPKG</sequence>
<accession>Q5WEA5</accession>
<gene>
    <name type="ordered locus">ABC2771</name>
</gene>
<organism>
    <name type="scientific">Shouchella clausii (strain KSM-K16)</name>
    <name type="common">Alkalihalobacillus clausii</name>
    <dbReference type="NCBI Taxonomy" id="66692"/>
    <lineage>
        <taxon>Bacteria</taxon>
        <taxon>Bacillati</taxon>
        <taxon>Bacillota</taxon>
        <taxon>Bacilli</taxon>
        <taxon>Bacillales</taxon>
        <taxon>Bacillaceae</taxon>
        <taxon>Shouchella</taxon>
    </lineage>
</organism>
<comment type="similarity">
    <text evidence="1">Belongs to the UPF0354 family.</text>
</comment>
<evidence type="ECO:0000255" key="1">
    <source>
        <dbReference type="HAMAP-Rule" id="MF_01548"/>
    </source>
</evidence>
<dbReference type="EMBL" id="AP006627">
    <property type="protein sequence ID" value="BAD65305.1"/>
    <property type="molecule type" value="Genomic_DNA"/>
</dbReference>
<dbReference type="RefSeq" id="WP_011247613.1">
    <property type="nucleotide sequence ID" value="NC_006582.1"/>
</dbReference>
<dbReference type="SMR" id="Q5WEA5"/>
<dbReference type="STRING" id="66692.ABC2771"/>
<dbReference type="KEGG" id="bcl:ABC2771"/>
<dbReference type="eggNOG" id="COG4848">
    <property type="taxonomic scope" value="Bacteria"/>
</dbReference>
<dbReference type="HOGENOM" id="CLU_085634_0_0_9"/>
<dbReference type="OrthoDB" id="154553at2"/>
<dbReference type="Proteomes" id="UP000001168">
    <property type="component" value="Chromosome"/>
</dbReference>
<dbReference type="HAMAP" id="MF_01548">
    <property type="entry name" value="UPF0354"/>
    <property type="match status" value="1"/>
</dbReference>
<dbReference type="InterPro" id="IPR010838">
    <property type="entry name" value="DUF1444"/>
</dbReference>
<dbReference type="NCBIfam" id="NF010189">
    <property type="entry name" value="PRK13668.1"/>
    <property type="match status" value="1"/>
</dbReference>
<dbReference type="Pfam" id="PF07285">
    <property type="entry name" value="DUF1444"/>
    <property type="match status" value="1"/>
</dbReference>
<dbReference type="PIRSF" id="PIRSF012562">
    <property type="entry name" value="UCP012562"/>
    <property type="match status" value="1"/>
</dbReference>
<feature type="chain" id="PRO_0000171097" description="UPF0354 protein ABC2771">
    <location>
        <begin position="1"/>
        <end position="265"/>
    </location>
</feature>
<name>Y2771_SHOC1</name>
<proteinExistence type="inferred from homology"/>